<sequence length="114" mass="12074">MSAPKPTRSQGDLAEMLEMLLDKGVVINADIAVSIGDTELLGIELRAAVASFETAAQYGLEFPTGTDMERVEEAAGISPDESRSLDTRSESEQMDELPGEAGASVSNTAPQEEE</sequence>
<name>GVPJ_HALMT</name>
<accession>Q02235</accession>
<accession>I3R599</accession>
<evidence type="ECO:0000250" key="1">
    <source>
        <dbReference type="UniProtKB" id="P24374"/>
    </source>
</evidence>
<evidence type="ECO:0000256" key="2">
    <source>
        <dbReference type="SAM" id="MobiDB-lite"/>
    </source>
</evidence>
<evidence type="ECO:0000269" key="3">
    <source>
    </source>
</evidence>
<evidence type="ECO:0000269" key="4">
    <source>
    </source>
</evidence>
<evidence type="ECO:0000303" key="5">
    <source>
    </source>
</evidence>
<evidence type="ECO:0000305" key="6"/>
<protein>
    <recommendedName>
        <fullName>Gas vesicle protein J</fullName>
        <shortName>GvpJ</shortName>
    </recommendedName>
</protein>
<gene>
    <name evidence="5" type="primary">gvpJ</name>
    <name type="ordered locus">HFX_1703</name>
</gene>
<organism>
    <name type="scientific">Haloferax mediterranei (strain ATCC 33500 / DSM 1411 / JCM 8866 / NBRC 14739 / NCIMB 2177 / R-4)</name>
    <name type="common">Halobacterium mediterranei</name>
    <dbReference type="NCBI Taxonomy" id="523841"/>
    <lineage>
        <taxon>Archaea</taxon>
        <taxon>Methanobacteriati</taxon>
        <taxon>Methanobacteriota</taxon>
        <taxon>Stenosarchaea group</taxon>
        <taxon>Halobacteria</taxon>
        <taxon>Halobacteriales</taxon>
        <taxon>Haloferacaceae</taxon>
        <taxon>Haloferax</taxon>
    </lineage>
</organism>
<keyword id="KW-0304">Gas vesicle</keyword>
<proteinExistence type="evidence at transcript level"/>
<reference key="1">
    <citation type="journal article" date="1992" name="J. Mol. Biol.">
        <title>Three different but related gene clusters encoding gas vesicles in halophilic archaea.</title>
        <authorList>
            <person name="Englert C."/>
            <person name="Krueger K."/>
            <person name="Offner S."/>
            <person name="Pfeifer F."/>
        </authorList>
    </citation>
    <scope>NUCLEOTIDE SEQUENCE [GENOMIC DNA]</scope>
    <scope>INDUCTION</scope>
    <scope>GAS VESICLE GENE CLUSTER</scope>
    <source>
        <strain>ATCC 33500 / DSM 1411 / JCM 8866 / NBRC 14739 / NCIMB 2177 / R-4</strain>
    </source>
</reference>
<reference key="2">
    <citation type="journal article" date="2012" name="J. Bacteriol.">
        <title>Complete genome sequence of the metabolically versatile halophilic archaeon Haloferax mediterranei, a poly(3-hydroxybutyrate-co-3-hydroxyvalerate) producer.</title>
        <authorList>
            <person name="Han J."/>
            <person name="Zhang F."/>
            <person name="Hou J."/>
            <person name="Liu X."/>
            <person name="Li M."/>
            <person name="Liu H."/>
            <person name="Cai L."/>
            <person name="Zhang B."/>
            <person name="Chen Y."/>
            <person name="Zhou J."/>
            <person name="Hu S."/>
            <person name="Xiang H."/>
        </authorList>
    </citation>
    <scope>NUCLEOTIDE SEQUENCE [LARGE SCALE GENOMIC DNA]</scope>
    <source>
        <strain>ATCC 33500 / DSM 1411 / JCM 8866 / NBRC 14739 / NCIMB 2177 / R-4</strain>
    </source>
</reference>
<reference key="3">
    <citation type="journal article" date="1996" name="Microbiology">
        <title>Influence of salt on the transcription of the gas-vesicle genes of Haloferax mediterranei and identification of the endogenous transcriptional activator gene.</title>
        <authorList>
            <person name="Roeder R."/>
            <person name="Pfeifer F."/>
        </authorList>
    </citation>
    <scope>INDUCTION BY SALT</scope>
    <source>
        <strain>ATCC 33500 / DSM 1411 / JCM 8866 / NBRC 14739 / NCIMB 2177 / R-4</strain>
    </source>
</reference>
<comment type="function">
    <text evidence="1">A minor component of the gas vesicle, proteins GvpF to GvpM might be involved in nucleating gas vesicle formation (By similarity). Gas vesicles are hollow, gas filled proteinaceous nanostructures found in some microorganisms. They allow positioning of halobacteria at the optimal depth for growth in the poorly aerated, shallow brine pools of their habitat (By similarity).</text>
</comment>
<comment type="function">
    <text evidence="3 4">Expression of a 9.5 kb mc-vac DNA fragment containing 2 divergently transcribed regions (gvpD-gvpE-gvpF-gvpG-gvpH-gvpI-gvpJ-gvpK-gvpL-gvpM and gvpA-gvpC-gvpN-gvpO) allows H.volcanii to produce gas vesicles.</text>
</comment>
<comment type="subunit">
    <text evidence="1">GvpF to GvpM interact with each other in vitro, and may form multi-subunit complex(es). Interacts with GvpA.</text>
</comment>
<comment type="subcellular location">
    <subcellularLocation>
        <location evidence="1">Gas vesicle</location>
    </subcellularLocation>
</comment>
<comment type="induction">
    <text evidence="3 4">Transcribed from early-log phase, decreases as cells enter stationary phase, probably as a long gvpF-gvpM RNA (PubMed:1404376). Highly expressed in 25% salt, poorly expressed in 15% salt, no gas vesicles are formed at 15% salt (PubMed:8757736).</text>
</comment>
<comment type="miscellaneous">
    <text evidence="3">Encoded in a 14-gene locus called mc-vac.</text>
</comment>
<comment type="similarity">
    <text evidence="6">Belongs to the gas vesicle GvpA family.</text>
</comment>
<feature type="chain" id="PRO_0000200002" description="Gas vesicle protein J">
    <location>
        <begin position="1"/>
        <end position="114"/>
    </location>
</feature>
<feature type="region of interest" description="Disordered" evidence="2">
    <location>
        <begin position="63"/>
        <end position="114"/>
    </location>
</feature>
<feature type="compositionally biased region" description="Basic and acidic residues" evidence="2">
    <location>
        <begin position="80"/>
        <end position="91"/>
    </location>
</feature>
<feature type="compositionally biased region" description="Polar residues" evidence="2">
    <location>
        <begin position="104"/>
        <end position="114"/>
    </location>
</feature>
<dbReference type="EMBL" id="X64701">
    <property type="protein sequence ID" value="CAA45952.1"/>
    <property type="molecule type" value="Genomic_DNA"/>
</dbReference>
<dbReference type="EMBL" id="CP001868">
    <property type="protein sequence ID" value="AFK19409.1"/>
    <property type="molecule type" value="Genomic_DNA"/>
</dbReference>
<dbReference type="PIR" id="S28123">
    <property type="entry name" value="S28123"/>
</dbReference>
<dbReference type="RefSeq" id="WP_004056699.1">
    <property type="nucleotide sequence ID" value="NC_017941.2"/>
</dbReference>
<dbReference type="SMR" id="Q02235"/>
<dbReference type="STRING" id="523841.HFX_1703"/>
<dbReference type="PaxDb" id="523841-HFX_1703"/>
<dbReference type="GeneID" id="40157058"/>
<dbReference type="KEGG" id="hme:HFX_1703"/>
<dbReference type="eggNOG" id="arCOG03093">
    <property type="taxonomic scope" value="Archaea"/>
</dbReference>
<dbReference type="HOGENOM" id="CLU_126378_1_0_2"/>
<dbReference type="OrthoDB" id="170622at2157"/>
<dbReference type="Proteomes" id="UP000006469">
    <property type="component" value="Chromosome"/>
</dbReference>
<dbReference type="GO" id="GO:0031411">
    <property type="term" value="C:gas vesicle"/>
    <property type="evidence" value="ECO:0007669"/>
    <property type="project" value="UniProtKB-SubCell"/>
</dbReference>
<dbReference type="GO" id="GO:0012506">
    <property type="term" value="C:vesicle membrane"/>
    <property type="evidence" value="ECO:0007669"/>
    <property type="project" value="InterPro"/>
</dbReference>
<dbReference type="GO" id="GO:0005198">
    <property type="term" value="F:structural molecule activity"/>
    <property type="evidence" value="ECO:0007669"/>
    <property type="project" value="InterPro"/>
</dbReference>
<dbReference type="InterPro" id="IPR000638">
    <property type="entry name" value="Gas-vesicle_GvpA-like"/>
</dbReference>
<dbReference type="InterPro" id="IPR050530">
    <property type="entry name" value="GvpA"/>
</dbReference>
<dbReference type="InterPro" id="IPR018493">
    <property type="entry name" value="GvpA-like_CS"/>
</dbReference>
<dbReference type="NCBIfam" id="NF046090">
    <property type="entry name" value="halo_gas_GvpJ"/>
    <property type="match status" value="1"/>
</dbReference>
<dbReference type="PANTHER" id="PTHR35344:SF4">
    <property type="entry name" value="GAS VESICLE PROTEIN A1"/>
    <property type="match status" value="1"/>
</dbReference>
<dbReference type="PANTHER" id="PTHR35344">
    <property type="entry name" value="GAS VESICLE STRUCTURAL PROTEIN 2-RELATED"/>
    <property type="match status" value="1"/>
</dbReference>
<dbReference type="Pfam" id="PF00741">
    <property type="entry name" value="Gas_vesicle"/>
    <property type="match status" value="1"/>
</dbReference>
<dbReference type="PROSITE" id="PS00234">
    <property type="entry name" value="GAS_VESICLE_A_1"/>
    <property type="match status" value="1"/>
</dbReference>
<dbReference type="PROSITE" id="PS00669">
    <property type="entry name" value="GAS_VESICLE_A_2"/>
    <property type="match status" value="1"/>
</dbReference>